<evidence type="ECO:0000255" key="1">
    <source>
        <dbReference type="HAMAP-Rule" id="MF_01851"/>
    </source>
</evidence>
<proteinExistence type="inferred from homology"/>
<organism>
    <name type="scientific">Staphylococcus aureus (strain COL)</name>
    <dbReference type="NCBI Taxonomy" id="93062"/>
    <lineage>
        <taxon>Bacteria</taxon>
        <taxon>Bacillati</taxon>
        <taxon>Bacillota</taxon>
        <taxon>Bacilli</taxon>
        <taxon>Bacillales</taxon>
        <taxon>Staphylococcaceae</taxon>
        <taxon>Staphylococcus</taxon>
    </lineage>
</organism>
<feature type="chain" id="PRO_0000348320" description="UPF0637 protein SACOL1115">
    <location>
        <begin position="1"/>
        <end position="204"/>
    </location>
</feature>
<comment type="similarity">
    <text evidence="1">Belongs to the UPF0637 family.</text>
</comment>
<protein>
    <recommendedName>
        <fullName evidence="1">UPF0637 protein SACOL1115</fullName>
    </recommendedName>
</protein>
<sequence>MTKYTFKPKDFKAFNVEGLDARMEALNEYIRPQLRELGEYFSDFFTSQTGETFYPHVAKHARRSVNPPKDTWVAFATNKRGYKMLPHFQIGMFEDQLFVMFGIMHEAKDKATRAKVFERKFKAIQQLPDDYRVCLDHMKPDKPFIKDLTDDDLIEAIQRAINVKKGEFFIARAITPQDKRLKSDKAFIAFLEETFDQFLPFYSA</sequence>
<reference key="1">
    <citation type="journal article" date="2005" name="J. Bacteriol.">
        <title>Insights on evolution of virulence and resistance from the complete genome analysis of an early methicillin-resistant Staphylococcus aureus strain and a biofilm-producing methicillin-resistant Staphylococcus epidermidis strain.</title>
        <authorList>
            <person name="Gill S.R."/>
            <person name="Fouts D.E."/>
            <person name="Archer G.L."/>
            <person name="Mongodin E.F."/>
            <person name="DeBoy R.T."/>
            <person name="Ravel J."/>
            <person name="Paulsen I.T."/>
            <person name="Kolonay J.F."/>
            <person name="Brinkac L.M."/>
            <person name="Beanan M.J."/>
            <person name="Dodson R.J."/>
            <person name="Daugherty S.C."/>
            <person name="Madupu R."/>
            <person name="Angiuoli S.V."/>
            <person name="Durkin A.S."/>
            <person name="Haft D.H."/>
            <person name="Vamathevan J.J."/>
            <person name="Khouri H."/>
            <person name="Utterback T.R."/>
            <person name="Lee C."/>
            <person name="Dimitrov G."/>
            <person name="Jiang L."/>
            <person name="Qin H."/>
            <person name="Weidman J."/>
            <person name="Tran K."/>
            <person name="Kang K.H."/>
            <person name="Hance I.R."/>
            <person name="Nelson K.E."/>
            <person name="Fraser C.M."/>
        </authorList>
    </citation>
    <scope>NUCLEOTIDE SEQUENCE [LARGE SCALE GENOMIC DNA]</scope>
    <source>
        <strain>COL</strain>
    </source>
</reference>
<name>Y1115_STAAC</name>
<gene>
    <name type="ordered locus">SACOL1115</name>
</gene>
<accession>Q5HGX8</accession>
<dbReference type="EMBL" id="CP000046">
    <property type="protein sequence ID" value="AAW37995.1"/>
    <property type="molecule type" value="Genomic_DNA"/>
</dbReference>
<dbReference type="RefSeq" id="WP_000170610.1">
    <property type="nucleotide sequence ID" value="NZ_JBGOFO010000002.1"/>
</dbReference>
<dbReference type="SMR" id="Q5HGX8"/>
<dbReference type="KEGG" id="sac:SACOL1115"/>
<dbReference type="HOGENOM" id="CLU_096059_0_0_9"/>
<dbReference type="Proteomes" id="UP000000530">
    <property type="component" value="Chromosome"/>
</dbReference>
<dbReference type="Gene3D" id="3.30.930.20">
    <property type="entry name" value="Protein of unknown function DUF1054"/>
    <property type="match status" value="1"/>
</dbReference>
<dbReference type="HAMAP" id="MF_01851">
    <property type="entry name" value="UPF0637"/>
    <property type="match status" value="1"/>
</dbReference>
<dbReference type="InterPro" id="IPR009403">
    <property type="entry name" value="UPF0637"/>
</dbReference>
<dbReference type="InterPro" id="IPR053707">
    <property type="entry name" value="UPF0637_domain_sf"/>
</dbReference>
<dbReference type="Pfam" id="PF06335">
    <property type="entry name" value="DUF1054"/>
    <property type="match status" value="1"/>
</dbReference>
<dbReference type="PIRSF" id="PIRSF021332">
    <property type="entry name" value="DUF1054"/>
    <property type="match status" value="1"/>
</dbReference>
<dbReference type="SUPFAM" id="SSF142913">
    <property type="entry name" value="YktB/PF0168-like"/>
    <property type="match status" value="1"/>
</dbReference>